<accession>Q2NI86</accession>
<evidence type="ECO:0000250" key="1"/>
<evidence type="ECO:0000255" key="2">
    <source>
        <dbReference type="HAMAP-Rule" id="MF_00138"/>
    </source>
</evidence>
<comment type="catalytic activity">
    <reaction evidence="2">
        <text>5-phospho-beta-D-ribosylamine + glycine + ATP = N(1)-(5-phospho-beta-D-ribosyl)glycinamide + ADP + phosphate + H(+)</text>
        <dbReference type="Rhea" id="RHEA:17453"/>
        <dbReference type="ChEBI" id="CHEBI:15378"/>
        <dbReference type="ChEBI" id="CHEBI:30616"/>
        <dbReference type="ChEBI" id="CHEBI:43474"/>
        <dbReference type="ChEBI" id="CHEBI:57305"/>
        <dbReference type="ChEBI" id="CHEBI:58681"/>
        <dbReference type="ChEBI" id="CHEBI:143788"/>
        <dbReference type="ChEBI" id="CHEBI:456216"/>
        <dbReference type="EC" id="6.3.4.13"/>
    </reaction>
</comment>
<comment type="cofactor">
    <cofactor evidence="1">
        <name>Mg(2+)</name>
        <dbReference type="ChEBI" id="CHEBI:18420"/>
    </cofactor>
    <cofactor evidence="1">
        <name>Mn(2+)</name>
        <dbReference type="ChEBI" id="CHEBI:29035"/>
    </cofactor>
    <text evidence="1">Binds 2 magnesium or manganese ions per subunit.</text>
</comment>
<comment type="pathway">
    <text evidence="2">Purine metabolism; IMP biosynthesis via de novo pathway; N(1)-(5-phospho-D-ribosyl)glycinamide from 5-phospho-alpha-D-ribose 1-diphosphate: step 2/2.</text>
</comment>
<comment type="similarity">
    <text evidence="2">Belongs to the GARS family.</text>
</comment>
<sequence>MKILMVGSGAREHAIAKALNKTADVYTYMGRKNPGLARISKNYTVNDESNFNEIIKFAQENNVELAFIGPEAPLEMGIVDELEKEGIHSVGPTKSAAQIETNKAFMRKLFEDYDIPGSIKYGTFYDLDEAYEFIDNFDEPVVVKPIGLTGGKGVKIVGDQLADNDEAKEYVKEIFHQKMGGFEGVVIEELLLGEEYTIQAFVDGTHLIPMPAAQDHPHAFVGNKGPITGGMGSYSDKNHLLPFLTQEDYDKSVEIMEKTIKAIAKEQEPYKGILYGQFMLCKDGPKVIEYNARFGDPESMNVLSVIDDDLAKISKQIVDGTLDSVNFLNKSSVCKYVVPDKYPNTHVADTVVDVDEDKINELGAQVFYAAVYQDMDDSIKLTSSRALGVLAVKDSIKEAEKICEEAIKYVKGEVYHRNDVATEELLNEKIKHMEEVRL</sequence>
<dbReference type="EC" id="6.3.4.13" evidence="2"/>
<dbReference type="EMBL" id="CP000102">
    <property type="protein sequence ID" value="ABC56449.1"/>
    <property type="molecule type" value="Genomic_DNA"/>
</dbReference>
<dbReference type="RefSeq" id="WP_011405648.1">
    <property type="nucleotide sequence ID" value="NC_007681.1"/>
</dbReference>
<dbReference type="SMR" id="Q2NI86"/>
<dbReference type="STRING" id="339860.Msp_0030"/>
<dbReference type="GeneID" id="41324602"/>
<dbReference type="KEGG" id="mst:Msp_0030"/>
<dbReference type="eggNOG" id="arCOG04415">
    <property type="taxonomic scope" value="Archaea"/>
</dbReference>
<dbReference type="HOGENOM" id="CLU_027420_3_0_2"/>
<dbReference type="OrthoDB" id="146558at2157"/>
<dbReference type="UniPathway" id="UPA00074">
    <property type="reaction ID" value="UER00125"/>
</dbReference>
<dbReference type="Proteomes" id="UP000001931">
    <property type="component" value="Chromosome"/>
</dbReference>
<dbReference type="GO" id="GO:0005524">
    <property type="term" value="F:ATP binding"/>
    <property type="evidence" value="ECO:0007669"/>
    <property type="project" value="UniProtKB-KW"/>
</dbReference>
<dbReference type="GO" id="GO:0046872">
    <property type="term" value="F:metal ion binding"/>
    <property type="evidence" value="ECO:0007669"/>
    <property type="project" value="UniProtKB-KW"/>
</dbReference>
<dbReference type="GO" id="GO:0004637">
    <property type="term" value="F:phosphoribosylamine-glycine ligase activity"/>
    <property type="evidence" value="ECO:0007669"/>
    <property type="project" value="UniProtKB-UniRule"/>
</dbReference>
<dbReference type="GO" id="GO:0006189">
    <property type="term" value="P:'de novo' IMP biosynthetic process"/>
    <property type="evidence" value="ECO:0007669"/>
    <property type="project" value="UniProtKB-UniRule"/>
</dbReference>
<dbReference type="GO" id="GO:0009113">
    <property type="term" value="P:purine nucleobase biosynthetic process"/>
    <property type="evidence" value="ECO:0007669"/>
    <property type="project" value="InterPro"/>
</dbReference>
<dbReference type="Gene3D" id="3.40.50.20">
    <property type="match status" value="1"/>
</dbReference>
<dbReference type="Gene3D" id="3.30.1490.20">
    <property type="entry name" value="ATP-grasp fold, A domain"/>
    <property type="match status" value="1"/>
</dbReference>
<dbReference type="Gene3D" id="3.30.470.20">
    <property type="entry name" value="ATP-grasp fold, B domain"/>
    <property type="match status" value="1"/>
</dbReference>
<dbReference type="Gene3D" id="3.90.600.10">
    <property type="entry name" value="Phosphoribosylglycinamide synthetase, C-terminal domain"/>
    <property type="match status" value="1"/>
</dbReference>
<dbReference type="HAMAP" id="MF_00138">
    <property type="entry name" value="GARS"/>
    <property type="match status" value="1"/>
</dbReference>
<dbReference type="InterPro" id="IPR011761">
    <property type="entry name" value="ATP-grasp"/>
</dbReference>
<dbReference type="InterPro" id="IPR013815">
    <property type="entry name" value="ATP_grasp_subdomain_1"/>
</dbReference>
<dbReference type="InterPro" id="IPR016185">
    <property type="entry name" value="PreATP-grasp_dom_sf"/>
</dbReference>
<dbReference type="InterPro" id="IPR020561">
    <property type="entry name" value="PRibGlycinamid_synth_ATP-grasp"/>
</dbReference>
<dbReference type="InterPro" id="IPR000115">
    <property type="entry name" value="PRibGlycinamide_synth"/>
</dbReference>
<dbReference type="InterPro" id="IPR020560">
    <property type="entry name" value="PRibGlycinamide_synth_C-dom"/>
</dbReference>
<dbReference type="InterPro" id="IPR037123">
    <property type="entry name" value="PRibGlycinamide_synth_C_sf"/>
</dbReference>
<dbReference type="InterPro" id="IPR020559">
    <property type="entry name" value="PRibGlycinamide_synth_CS"/>
</dbReference>
<dbReference type="InterPro" id="IPR020562">
    <property type="entry name" value="PRibGlycinamide_synth_N"/>
</dbReference>
<dbReference type="InterPro" id="IPR011054">
    <property type="entry name" value="Rudment_hybrid_motif"/>
</dbReference>
<dbReference type="NCBIfam" id="TIGR00877">
    <property type="entry name" value="purD"/>
    <property type="match status" value="1"/>
</dbReference>
<dbReference type="PANTHER" id="PTHR43472">
    <property type="entry name" value="PHOSPHORIBOSYLAMINE--GLYCINE LIGASE"/>
    <property type="match status" value="1"/>
</dbReference>
<dbReference type="PANTHER" id="PTHR43472:SF1">
    <property type="entry name" value="PHOSPHORIBOSYLAMINE--GLYCINE LIGASE, CHLOROPLASTIC"/>
    <property type="match status" value="1"/>
</dbReference>
<dbReference type="Pfam" id="PF01071">
    <property type="entry name" value="GARS_A"/>
    <property type="match status" value="1"/>
</dbReference>
<dbReference type="Pfam" id="PF02843">
    <property type="entry name" value="GARS_C"/>
    <property type="match status" value="1"/>
</dbReference>
<dbReference type="Pfam" id="PF02844">
    <property type="entry name" value="GARS_N"/>
    <property type="match status" value="1"/>
</dbReference>
<dbReference type="SMART" id="SM01209">
    <property type="entry name" value="GARS_A"/>
    <property type="match status" value="1"/>
</dbReference>
<dbReference type="SMART" id="SM01210">
    <property type="entry name" value="GARS_C"/>
    <property type="match status" value="1"/>
</dbReference>
<dbReference type="SUPFAM" id="SSF56059">
    <property type="entry name" value="Glutathione synthetase ATP-binding domain-like"/>
    <property type="match status" value="1"/>
</dbReference>
<dbReference type="SUPFAM" id="SSF52440">
    <property type="entry name" value="PreATP-grasp domain"/>
    <property type="match status" value="1"/>
</dbReference>
<dbReference type="SUPFAM" id="SSF51246">
    <property type="entry name" value="Rudiment single hybrid motif"/>
    <property type="match status" value="1"/>
</dbReference>
<dbReference type="PROSITE" id="PS50975">
    <property type="entry name" value="ATP_GRASP"/>
    <property type="match status" value="1"/>
</dbReference>
<dbReference type="PROSITE" id="PS00184">
    <property type="entry name" value="GARS"/>
    <property type="match status" value="1"/>
</dbReference>
<reference key="1">
    <citation type="journal article" date="2006" name="J. Bacteriol.">
        <title>The genome sequence of Methanosphaera stadtmanae reveals why this human intestinal archaeon is restricted to methanol and H2 for methane formation and ATP synthesis.</title>
        <authorList>
            <person name="Fricke W.F."/>
            <person name="Seedorf H."/>
            <person name="Henne A."/>
            <person name="Kruer M."/>
            <person name="Liesegang H."/>
            <person name="Hedderich R."/>
            <person name="Gottschalk G."/>
            <person name="Thauer R.K."/>
        </authorList>
    </citation>
    <scope>NUCLEOTIDE SEQUENCE [LARGE SCALE GENOMIC DNA]</scope>
    <source>
        <strain>ATCC 43021 / DSM 3091 / JCM 11832 / MCB-3</strain>
    </source>
</reference>
<name>PUR2_METST</name>
<organism>
    <name type="scientific">Methanosphaera stadtmanae (strain ATCC 43021 / DSM 3091 / JCM 11832 / MCB-3)</name>
    <dbReference type="NCBI Taxonomy" id="339860"/>
    <lineage>
        <taxon>Archaea</taxon>
        <taxon>Methanobacteriati</taxon>
        <taxon>Methanobacteriota</taxon>
        <taxon>Methanomada group</taxon>
        <taxon>Methanobacteria</taxon>
        <taxon>Methanobacteriales</taxon>
        <taxon>Methanobacteriaceae</taxon>
        <taxon>Methanosphaera</taxon>
    </lineage>
</organism>
<keyword id="KW-0067">ATP-binding</keyword>
<keyword id="KW-0436">Ligase</keyword>
<keyword id="KW-0460">Magnesium</keyword>
<keyword id="KW-0464">Manganese</keyword>
<keyword id="KW-0479">Metal-binding</keyword>
<keyword id="KW-0547">Nucleotide-binding</keyword>
<keyword id="KW-0658">Purine biosynthesis</keyword>
<keyword id="KW-1185">Reference proteome</keyword>
<gene>
    <name evidence="2" type="primary">purD</name>
    <name type="ordered locus">Msp_0030</name>
</gene>
<proteinExistence type="inferred from homology"/>
<protein>
    <recommendedName>
        <fullName evidence="2">Phosphoribosylamine--glycine ligase</fullName>
        <ecNumber evidence="2">6.3.4.13</ecNumber>
    </recommendedName>
    <alternativeName>
        <fullName evidence="2">GARS</fullName>
    </alternativeName>
    <alternativeName>
        <fullName evidence="2">Glycinamide ribonucleotide synthetase</fullName>
    </alternativeName>
    <alternativeName>
        <fullName evidence="2">Phosphoribosylglycinamide synthetase</fullName>
    </alternativeName>
</protein>
<feature type="chain" id="PRO_1000018829" description="Phosphoribosylamine--glycine ligase">
    <location>
        <begin position="1"/>
        <end position="438"/>
    </location>
</feature>
<feature type="domain" description="ATP-grasp" evidence="2">
    <location>
        <begin position="107"/>
        <end position="319"/>
    </location>
</feature>
<feature type="binding site" evidence="2">
    <location>
        <begin position="134"/>
        <end position="197"/>
    </location>
    <ligand>
        <name>ATP</name>
        <dbReference type="ChEBI" id="CHEBI:30616"/>
    </ligand>
</feature>
<feature type="binding site" evidence="2">
    <location>
        <position position="277"/>
    </location>
    <ligand>
        <name>Mg(2+)</name>
        <dbReference type="ChEBI" id="CHEBI:18420"/>
        <label>1</label>
    </ligand>
</feature>
<feature type="binding site" evidence="2">
    <location>
        <position position="277"/>
    </location>
    <ligand>
        <name>Mn(2+)</name>
        <dbReference type="ChEBI" id="CHEBI:29035"/>
        <label>1</label>
    </ligand>
</feature>
<feature type="binding site" evidence="2">
    <location>
        <position position="289"/>
    </location>
    <ligand>
        <name>Mg(2+)</name>
        <dbReference type="ChEBI" id="CHEBI:18420"/>
        <label>1</label>
    </ligand>
</feature>
<feature type="binding site" evidence="2">
    <location>
        <position position="289"/>
    </location>
    <ligand>
        <name>Mg(2+)</name>
        <dbReference type="ChEBI" id="CHEBI:18420"/>
        <label>2</label>
    </ligand>
</feature>
<feature type="binding site" evidence="2">
    <location>
        <position position="289"/>
    </location>
    <ligand>
        <name>Mn(2+)</name>
        <dbReference type="ChEBI" id="CHEBI:29035"/>
        <label>1</label>
    </ligand>
</feature>
<feature type="binding site" evidence="2">
    <location>
        <position position="289"/>
    </location>
    <ligand>
        <name>Mn(2+)</name>
        <dbReference type="ChEBI" id="CHEBI:29035"/>
        <label>2</label>
    </ligand>
</feature>
<feature type="binding site" evidence="2">
    <location>
        <position position="291"/>
    </location>
    <ligand>
        <name>Mg(2+)</name>
        <dbReference type="ChEBI" id="CHEBI:18420"/>
        <label>2</label>
    </ligand>
</feature>
<feature type="binding site" evidence="2">
    <location>
        <position position="291"/>
    </location>
    <ligand>
        <name>Mn(2+)</name>
        <dbReference type="ChEBI" id="CHEBI:29035"/>
        <label>2</label>
    </ligand>
</feature>